<comment type="function">
    <text evidence="1">Specifically methylates the adenine in position 1618 of 23S rRNA.</text>
</comment>
<comment type="catalytic activity">
    <reaction evidence="1">
        <text>adenosine(1618) in 23S rRNA + S-adenosyl-L-methionine = N(6)-methyladenosine(1618) in 23S rRNA + S-adenosyl-L-homocysteine + H(+)</text>
        <dbReference type="Rhea" id="RHEA:16497"/>
        <dbReference type="Rhea" id="RHEA-COMP:10229"/>
        <dbReference type="Rhea" id="RHEA-COMP:10231"/>
        <dbReference type="ChEBI" id="CHEBI:15378"/>
        <dbReference type="ChEBI" id="CHEBI:57856"/>
        <dbReference type="ChEBI" id="CHEBI:59789"/>
        <dbReference type="ChEBI" id="CHEBI:74411"/>
        <dbReference type="ChEBI" id="CHEBI:74449"/>
        <dbReference type="EC" id="2.1.1.181"/>
    </reaction>
</comment>
<comment type="subcellular location">
    <subcellularLocation>
        <location evidence="1">Cytoplasm</location>
    </subcellularLocation>
</comment>
<comment type="similarity">
    <text evidence="1">Belongs to the methyltransferase superfamily. METTL16/RlmF family.</text>
</comment>
<accession>A9R6I2</accession>
<dbReference type="EC" id="2.1.1.181" evidence="1"/>
<dbReference type="EMBL" id="CP000901">
    <property type="protein sequence ID" value="ABX88045.1"/>
    <property type="molecule type" value="Genomic_DNA"/>
</dbReference>
<dbReference type="SMR" id="A9R6I2"/>
<dbReference type="KEGG" id="ypg:YpAngola_A1777"/>
<dbReference type="GO" id="GO:0005737">
    <property type="term" value="C:cytoplasm"/>
    <property type="evidence" value="ECO:0007669"/>
    <property type="project" value="UniProtKB-SubCell"/>
</dbReference>
<dbReference type="GO" id="GO:0052907">
    <property type="term" value="F:23S rRNA (adenine(1618)-N(6))-methyltransferase activity"/>
    <property type="evidence" value="ECO:0007669"/>
    <property type="project" value="UniProtKB-EC"/>
</dbReference>
<dbReference type="GO" id="GO:0070475">
    <property type="term" value="P:rRNA base methylation"/>
    <property type="evidence" value="ECO:0007669"/>
    <property type="project" value="TreeGrafter"/>
</dbReference>
<dbReference type="CDD" id="cd02440">
    <property type="entry name" value="AdoMet_MTases"/>
    <property type="match status" value="1"/>
</dbReference>
<dbReference type="FunFam" id="3.40.50.150:FF:000045">
    <property type="entry name" value="Ribosomal RNA large subunit methyltransferase F"/>
    <property type="match status" value="1"/>
</dbReference>
<dbReference type="Gene3D" id="3.40.50.150">
    <property type="entry name" value="Vaccinia Virus protein VP39"/>
    <property type="match status" value="1"/>
</dbReference>
<dbReference type="HAMAP" id="MF_01848">
    <property type="entry name" value="23SrRNA_methyltr_F"/>
    <property type="match status" value="1"/>
</dbReference>
<dbReference type="InterPro" id="IPR010286">
    <property type="entry name" value="METTL16/RlmF"/>
</dbReference>
<dbReference type="InterPro" id="IPR016909">
    <property type="entry name" value="rRNA_lsu_MeTfrase_F"/>
</dbReference>
<dbReference type="InterPro" id="IPR029063">
    <property type="entry name" value="SAM-dependent_MTases_sf"/>
</dbReference>
<dbReference type="NCBIfam" id="NF008725">
    <property type="entry name" value="PRK11727.1"/>
    <property type="match status" value="1"/>
</dbReference>
<dbReference type="PANTHER" id="PTHR13393:SF0">
    <property type="entry name" value="RNA N6-ADENOSINE-METHYLTRANSFERASE METTL16"/>
    <property type="match status" value="1"/>
</dbReference>
<dbReference type="PANTHER" id="PTHR13393">
    <property type="entry name" value="SAM-DEPENDENT METHYLTRANSFERASE"/>
    <property type="match status" value="1"/>
</dbReference>
<dbReference type="Pfam" id="PF05971">
    <property type="entry name" value="Methyltransf_10"/>
    <property type="match status" value="1"/>
</dbReference>
<dbReference type="PIRSF" id="PIRSF029038">
    <property type="entry name" value="Mtase_YbiN_prd"/>
    <property type="match status" value="1"/>
</dbReference>
<dbReference type="SUPFAM" id="SSF53335">
    <property type="entry name" value="S-adenosyl-L-methionine-dependent methyltransferases"/>
    <property type="match status" value="1"/>
</dbReference>
<organism>
    <name type="scientific">Yersinia pestis bv. Antiqua (strain Angola)</name>
    <dbReference type="NCBI Taxonomy" id="349746"/>
    <lineage>
        <taxon>Bacteria</taxon>
        <taxon>Pseudomonadati</taxon>
        <taxon>Pseudomonadota</taxon>
        <taxon>Gammaproteobacteria</taxon>
        <taxon>Enterobacterales</taxon>
        <taxon>Yersiniaceae</taxon>
        <taxon>Yersinia</taxon>
    </lineage>
</organism>
<sequence length="336" mass="37560">MLSYAPENAYQRASTMENKKVFPKEKSGLHPRNRHRSRYDFDALSVSCPELIPFLTPTAYGDISVDFADPLAVKMLNKALLKHFYGIEYWDIPADSLCPPIPGRADYVHHLADLLASCNGEVIPKGKNIALLDIGVGANCIYPIIGQREYGWRFTGTDIDSHALSAAKMVVSMNPTLKNTLRLKQQKDPHAIFEGVWAVNERYDATLCNPPFHGSAEEAAATTRRKLHKLGKNEVAAKPVQNFGGKNSELWCEGGEEGFVSRMVAESVAKAQNCFWFTSLISKKTTLPAIYHALRYVKAVEVRTIEMAQGQKVSRFVAWTFLTPEQQAAWVAERWA</sequence>
<reference key="1">
    <citation type="journal article" date="2010" name="J. Bacteriol.">
        <title>Genome sequence of the deep-rooted Yersinia pestis strain Angola reveals new insights into the evolution and pangenome of the plague bacterium.</title>
        <authorList>
            <person name="Eppinger M."/>
            <person name="Worsham P.L."/>
            <person name="Nikolich M.P."/>
            <person name="Riley D.R."/>
            <person name="Sebastian Y."/>
            <person name="Mou S."/>
            <person name="Achtman M."/>
            <person name="Lindler L.E."/>
            <person name="Ravel J."/>
        </authorList>
    </citation>
    <scope>NUCLEOTIDE SEQUENCE [LARGE SCALE GENOMIC DNA]</scope>
    <source>
        <strain>Angola</strain>
    </source>
</reference>
<keyword id="KW-0963">Cytoplasm</keyword>
<keyword id="KW-0489">Methyltransferase</keyword>
<keyword id="KW-0698">rRNA processing</keyword>
<keyword id="KW-0949">S-adenosyl-L-methionine</keyword>
<keyword id="KW-0808">Transferase</keyword>
<proteinExistence type="inferred from homology"/>
<protein>
    <recommendedName>
        <fullName evidence="1">Ribosomal RNA large subunit methyltransferase F</fullName>
        <ecNumber evidence="1">2.1.1.181</ecNumber>
    </recommendedName>
    <alternativeName>
        <fullName evidence="1">23S rRNA mA1618 methyltransferase</fullName>
    </alternativeName>
    <alternativeName>
        <fullName evidence="1">rRNA adenine N-6-methyltransferase</fullName>
    </alternativeName>
</protein>
<name>RLMF_YERPG</name>
<feature type="chain" id="PRO_0000349983" description="Ribosomal RNA large subunit methyltransferase F">
    <location>
        <begin position="1"/>
        <end position="336"/>
    </location>
</feature>
<evidence type="ECO:0000255" key="1">
    <source>
        <dbReference type="HAMAP-Rule" id="MF_01848"/>
    </source>
</evidence>
<gene>
    <name evidence="1" type="primary">rlmF</name>
    <name type="ordered locus">YpAngola_A1777</name>
</gene>